<keyword id="KW-1015">Disulfide bond</keyword>
<keyword id="KW-0872">Ion channel impairing toxin</keyword>
<keyword id="KW-0528">Neurotoxin</keyword>
<keyword id="KW-0964">Secreted</keyword>
<keyword id="KW-0732">Signal</keyword>
<keyword id="KW-0800">Toxin</keyword>
<keyword id="KW-0738">Voltage-gated sodium channel impairing toxin</keyword>
<name>SNAAA_LYCMC</name>
<protein>
    <recommendedName>
        <fullName>Neurotoxin LmNaTx10</fullName>
    </recommendedName>
</protein>
<accession>D9U2A0</accession>
<evidence type="ECO:0000250" key="1"/>
<evidence type="ECO:0000255" key="2"/>
<evidence type="ECO:0000255" key="3">
    <source>
        <dbReference type="PROSITE-ProRule" id="PRU01210"/>
    </source>
</evidence>
<evidence type="ECO:0000305" key="4"/>
<organism>
    <name type="scientific">Lychas mucronatus</name>
    <name type="common">Chinese swimming scorpion</name>
    <dbReference type="NCBI Taxonomy" id="172552"/>
    <lineage>
        <taxon>Eukaryota</taxon>
        <taxon>Metazoa</taxon>
        <taxon>Ecdysozoa</taxon>
        <taxon>Arthropoda</taxon>
        <taxon>Chelicerata</taxon>
        <taxon>Arachnida</taxon>
        <taxon>Scorpiones</taxon>
        <taxon>Buthida</taxon>
        <taxon>Buthoidea</taxon>
        <taxon>Buthidae</taxon>
        <taxon>Lychas</taxon>
    </lineage>
</organism>
<dbReference type="EMBL" id="EU159285">
    <property type="protein sequence ID" value="ABX76758.1"/>
    <property type="molecule type" value="mRNA"/>
</dbReference>
<dbReference type="SMR" id="D9U2A0"/>
<dbReference type="GO" id="GO:0005576">
    <property type="term" value="C:extracellular region"/>
    <property type="evidence" value="ECO:0007669"/>
    <property type="project" value="UniProtKB-SubCell"/>
</dbReference>
<dbReference type="GO" id="GO:0019871">
    <property type="term" value="F:sodium channel inhibitor activity"/>
    <property type="evidence" value="ECO:0007669"/>
    <property type="project" value="InterPro"/>
</dbReference>
<dbReference type="GO" id="GO:0090729">
    <property type="term" value="F:toxin activity"/>
    <property type="evidence" value="ECO:0007669"/>
    <property type="project" value="UniProtKB-KW"/>
</dbReference>
<dbReference type="GO" id="GO:0006952">
    <property type="term" value="P:defense response"/>
    <property type="evidence" value="ECO:0007669"/>
    <property type="project" value="InterPro"/>
</dbReference>
<dbReference type="CDD" id="cd23106">
    <property type="entry name" value="neurotoxins_LC_scorpion"/>
    <property type="match status" value="1"/>
</dbReference>
<dbReference type="Gene3D" id="3.30.30.10">
    <property type="entry name" value="Knottin, scorpion toxin-like"/>
    <property type="match status" value="1"/>
</dbReference>
<dbReference type="InterPro" id="IPR044062">
    <property type="entry name" value="LCN-type_CS_alpha_beta_dom"/>
</dbReference>
<dbReference type="InterPro" id="IPR003614">
    <property type="entry name" value="Scorpion_toxin-like"/>
</dbReference>
<dbReference type="InterPro" id="IPR036574">
    <property type="entry name" value="Scorpion_toxin-like_sf"/>
</dbReference>
<dbReference type="InterPro" id="IPR018218">
    <property type="entry name" value="Scorpion_toxinL"/>
</dbReference>
<dbReference type="InterPro" id="IPR002061">
    <property type="entry name" value="Scorpion_toxinL/defensin"/>
</dbReference>
<dbReference type="Pfam" id="PF00537">
    <property type="entry name" value="Toxin_3"/>
    <property type="match status" value="1"/>
</dbReference>
<dbReference type="PRINTS" id="PR00285">
    <property type="entry name" value="SCORPNTOXIN"/>
</dbReference>
<dbReference type="SMART" id="SM00505">
    <property type="entry name" value="Knot1"/>
    <property type="match status" value="1"/>
</dbReference>
<dbReference type="SUPFAM" id="SSF57095">
    <property type="entry name" value="Scorpion toxin-like"/>
    <property type="match status" value="1"/>
</dbReference>
<dbReference type="PROSITE" id="PS51863">
    <property type="entry name" value="LCN_CSAB"/>
    <property type="match status" value="1"/>
</dbReference>
<feature type="signal peptide" evidence="2">
    <location>
        <begin position="1"/>
        <end position="19"/>
    </location>
</feature>
<feature type="chain" id="PRO_0000403811" description="Neurotoxin LmNaTx10">
    <location>
        <begin position="20"/>
        <end position="83"/>
    </location>
</feature>
<feature type="domain" description="LCN-type CS-alpha/beta" evidence="3">
    <location>
        <begin position="21"/>
        <end position="80"/>
    </location>
</feature>
<feature type="disulfide bond" evidence="3">
    <location>
        <begin position="31"/>
        <end position="79"/>
    </location>
</feature>
<feature type="disulfide bond" evidence="3">
    <location>
        <begin position="35"/>
        <end position="55"/>
    </location>
</feature>
<feature type="disulfide bond" evidence="3">
    <location>
        <begin position="41"/>
        <end position="62"/>
    </location>
</feature>
<feature type="disulfide bond" evidence="3">
    <location>
        <begin position="45"/>
        <end position="64"/>
    </location>
</feature>
<reference key="1">
    <citation type="journal article" date="2010" name="BMC Genomics">
        <title>Comparative venom gland transcriptome analysis of the scorpion Lychas mucronatus reveals intraspecific toxic gene diversity and new venomous components.</title>
        <authorList>
            <person name="Zhao R."/>
            <person name="Ma Y."/>
            <person name="He Y."/>
            <person name="Di Z."/>
            <person name="Wu Y.-L."/>
            <person name="Cao Z.-J."/>
            <person name="Li W.-X."/>
        </authorList>
    </citation>
    <scope>NUCLEOTIDE SEQUENCE [MRNA]</scope>
    <source>
        <strain>Hainan</strain>
        <tissue>Venom gland</tissue>
    </source>
</reference>
<comment type="function">
    <text evidence="1">Binds voltage-independently at site-3 of voltage-gated sodium channels (Nav) and inhibits the inactivation of the activated channels, thereby blocking neuronal transmission.</text>
</comment>
<comment type="subcellular location">
    <subcellularLocation>
        <location evidence="1">Secreted</location>
    </subcellularLocation>
</comment>
<comment type="tissue specificity">
    <text>Expressed by the venom gland.</text>
</comment>
<comment type="domain">
    <text evidence="4">Has the structural arrangement of an alpha-helix connected to antiparallel beta-sheets by disulfide bonds (CS-alpha/beta).</text>
</comment>
<comment type="similarity">
    <text evidence="4">Belongs to the long (4 C-C) scorpion toxin superfamily. Sodium channel inhibitor family. Alpha subfamily.</text>
</comment>
<sequence>MNFLIFIAVASSLALGALCKKEGYPYDGNNCRYICFRNQYCDDLCKKLKGESGYCYGWNQSCYCYGLPDTEKTKPDKRCHSKG</sequence>
<proteinExistence type="evidence at transcript level"/>